<proteinExistence type="evidence at protein level"/>
<dbReference type="EC" id="3.2.1.130" evidence="2"/>
<dbReference type="EMBL" id="AF023657">
    <property type="protein sequence ID" value="AAB86925.1"/>
    <property type="status" value="ALT_SEQ"/>
    <property type="molecule type" value="mRNA"/>
</dbReference>
<dbReference type="EMBL" id="AY599499">
    <property type="protein sequence ID" value="AAT44962.1"/>
    <property type="molecule type" value="mRNA"/>
</dbReference>
<dbReference type="RefSeq" id="NP_542963.2">
    <property type="nucleotide sequence ID" value="NM_080785.3"/>
</dbReference>
<dbReference type="RefSeq" id="XP_006238022.1">
    <property type="nucleotide sequence ID" value="XM_006237960.2"/>
</dbReference>
<dbReference type="RefSeq" id="XP_006238023.1">
    <property type="nucleotide sequence ID" value="XM_006237961.4"/>
</dbReference>
<dbReference type="SMR" id="Q5GF25"/>
<dbReference type="FunCoup" id="Q5GF25">
    <property type="interactions" value="1914"/>
</dbReference>
<dbReference type="STRING" id="10116.ENSRNOP00000011576"/>
<dbReference type="CAZy" id="GH99">
    <property type="family name" value="Glycoside Hydrolase Family 99"/>
</dbReference>
<dbReference type="PhosphoSitePlus" id="Q5GF25"/>
<dbReference type="PaxDb" id="10116-ENSRNOP00000011576"/>
<dbReference type="Ensembl" id="ENSRNOT00000011576.7">
    <property type="protein sequence ID" value="ENSRNOP00000011576.4"/>
    <property type="gene ID" value="ENSRNOG00000008626.7"/>
</dbReference>
<dbReference type="GeneID" id="140808"/>
<dbReference type="KEGG" id="rno:140808"/>
<dbReference type="UCSC" id="RGD:620327">
    <property type="organism name" value="rat"/>
</dbReference>
<dbReference type="AGR" id="RGD:620327"/>
<dbReference type="CTD" id="79694"/>
<dbReference type="RGD" id="620327">
    <property type="gene designation" value="Manea"/>
</dbReference>
<dbReference type="eggNOG" id="ENOG502QPJV">
    <property type="taxonomic scope" value="Eukaryota"/>
</dbReference>
<dbReference type="GeneTree" id="ENSGT00390000016054"/>
<dbReference type="HOGENOM" id="CLU_042710_1_1_1"/>
<dbReference type="InParanoid" id="Q5GF25"/>
<dbReference type="OMA" id="GFLDYNP"/>
<dbReference type="OrthoDB" id="406152at2759"/>
<dbReference type="PhylomeDB" id="Q5GF25"/>
<dbReference type="TreeFam" id="TF324051"/>
<dbReference type="BRENDA" id="3.2.1.130">
    <property type="organism ID" value="5301"/>
</dbReference>
<dbReference type="Reactome" id="R-RNO-964739">
    <property type="pathway name" value="N-glycan trimming and elongation in the cis-Golgi"/>
</dbReference>
<dbReference type="PRO" id="PR:Q5GF25"/>
<dbReference type="Proteomes" id="UP000002494">
    <property type="component" value="Chromosome 5"/>
</dbReference>
<dbReference type="Bgee" id="ENSRNOG00000008626">
    <property type="expression patterns" value="Expressed in duodenum and 20 other cell types or tissues"/>
</dbReference>
<dbReference type="GO" id="GO:0000139">
    <property type="term" value="C:Golgi membrane"/>
    <property type="evidence" value="ECO:0000266"/>
    <property type="project" value="RGD"/>
</dbReference>
<dbReference type="GO" id="GO:0004559">
    <property type="term" value="F:alpha-mannosidase activity"/>
    <property type="evidence" value="ECO:0000314"/>
    <property type="project" value="RGD"/>
</dbReference>
<dbReference type="GO" id="GO:0004569">
    <property type="term" value="F:glycoprotein endo-alpha-1,2-mannosidase activity"/>
    <property type="evidence" value="ECO:0000266"/>
    <property type="project" value="RGD"/>
</dbReference>
<dbReference type="CDD" id="cd11574">
    <property type="entry name" value="GH99"/>
    <property type="match status" value="1"/>
</dbReference>
<dbReference type="FunFam" id="3.20.20.80:FF:000019">
    <property type="entry name" value="glycoprotein endo-alpha-1,2-mannosidase"/>
    <property type="match status" value="1"/>
</dbReference>
<dbReference type="Gene3D" id="3.20.20.80">
    <property type="entry name" value="Glycosidases"/>
    <property type="match status" value="1"/>
</dbReference>
<dbReference type="InterPro" id="IPR026071">
    <property type="entry name" value="Glyco_Hydrolase_99"/>
</dbReference>
<dbReference type="PANTHER" id="PTHR13572">
    <property type="entry name" value="ENDO-ALPHA-1,2-MANNOSIDASE"/>
    <property type="match status" value="1"/>
</dbReference>
<dbReference type="PANTHER" id="PTHR13572:SF1">
    <property type="entry name" value="GLYCOPROTEIN ENDO-ALPHA-1,2-MANNOSIDASE"/>
    <property type="match status" value="1"/>
</dbReference>
<dbReference type="Pfam" id="PF16317">
    <property type="entry name" value="Glyco_hydro_99"/>
    <property type="match status" value="1"/>
</dbReference>
<sequence length="462" mass="53416">MAKFRRRTCIILSLFIVFIFSLMMGLKMLWPNAASFGPPFGLDLLPELRPPNTHLENKADFQRSDRIDMETNTKDLKGAGVTVHPPRASEVNLEELPPLNYFVHAFYYSWYGNPQFDGKYVHWNHPVLEHWDPRIAKNYPQGRHSPPDDIGSSFYPELGSYSSRDPSVIETHMKQMRSASIGVLALSWYPPDASDENGEATDYLVPTILDKAHKYNLKVTFHIEPYSNRDDQNMHQNVKYIIDKYGNHPAFYRYKTRMGHSLPMFYIYDSYITKPKTWANLLTPSGSQSVRGSPYDGLFIALLVEEKHKYDILQSGFDGIYTYFATNGFTYGSSHQNWNKLKSFCEKNNMIFIPSVGPGYIDTSIRPWNTQNTRNRINGKYYEVGLSAALQTQPSLISITSFNEWHEGTQIEKAVPKRTANTVYLDYRPHKPSLYLEITRKWSEKYSKERMTYALDQQLPAS</sequence>
<comment type="catalytic activity">
    <reaction evidence="2">
        <text>N-{alpha-Glc-(1-&gt;3)-alpha-Man-(1-&gt;2)-alpha-Man-(1-&gt;2)-alpha-Man-(1-&gt;3)-[alpha-Man-(1-&gt;2)-alpha-Man-(1-&gt;3)-[alpha-Man-(1-&gt;2)-alpha-Man-(1-&gt;6)]-alpha-Man-(1-&gt;6)]-beta-Man-(1-&gt;4)-beta-GlcNAc-(1-&gt;4)-beta-GlcNAc}-L-asparaginyl-[protein] + H2O = alpha-D-glucosyl-(1-&gt;3)-D-mannopyranose + N(4)-{alpha-D-Man-(1-&gt;2)-alpha-D-Man-(1-&gt;3)-[alpha-D-Man-(1-&gt;2)-alpha-D-Man-(1-&gt;3)-[alpha-D-Man-(1-&gt;2)-alpha-D-Man-(1-&gt;6)]-alpha-D-Man-(1-&gt;6)]-beta-D-Man-(1-&gt;4)-beta-D-GlaNAc-(1-&gt;4)-beta-D-GlcNAc}-L-asparaginyl-[protein] (N-glucan mannose isomer 8A1,2,3B1,2)</text>
        <dbReference type="Rhea" id="RHEA:54824"/>
        <dbReference type="Rhea" id="RHEA-COMP:14010"/>
        <dbReference type="Rhea" id="RHEA-COMP:14011"/>
        <dbReference type="ChEBI" id="CHEBI:15377"/>
        <dbReference type="ChEBI" id="CHEBI:52996"/>
        <dbReference type="ChEBI" id="CHEBI:59080"/>
        <dbReference type="ChEBI" id="CHEBI:60627"/>
        <dbReference type="EC" id="3.2.1.130"/>
    </reaction>
</comment>
<comment type="subcellular location">
    <subcellularLocation>
        <location evidence="2">Golgi apparatus membrane</location>
        <topology evidence="2">Single-pass type II membrane protein</topology>
    </subcellularLocation>
</comment>
<comment type="tissue specificity">
    <text evidence="3">Highly expressed in the liver and kidney.</text>
</comment>
<comment type="PTM">
    <text>Undergoes proteolytic cleavage in the C-terminal region.</text>
</comment>
<comment type="similarity">
    <text evidence="4">Belongs to the glycosyl hydrolase 99 family.</text>
</comment>
<comment type="sequence caution" evidence="4">
    <conflict type="miscellaneous discrepancy">
        <sequence resource="EMBL-CDS" id="AAB86925"/>
    </conflict>
    <text>Cloning artifact. The sequence differs from that shown at the N-terminus (1-54).</text>
</comment>
<organism>
    <name type="scientific">Rattus norvegicus</name>
    <name type="common">Rat</name>
    <dbReference type="NCBI Taxonomy" id="10116"/>
    <lineage>
        <taxon>Eukaryota</taxon>
        <taxon>Metazoa</taxon>
        <taxon>Chordata</taxon>
        <taxon>Craniata</taxon>
        <taxon>Vertebrata</taxon>
        <taxon>Euteleostomi</taxon>
        <taxon>Mammalia</taxon>
        <taxon>Eutheria</taxon>
        <taxon>Euarchontoglires</taxon>
        <taxon>Glires</taxon>
        <taxon>Rodentia</taxon>
        <taxon>Myomorpha</taxon>
        <taxon>Muroidea</taxon>
        <taxon>Muridae</taxon>
        <taxon>Murinae</taxon>
        <taxon>Rattus</taxon>
    </lineage>
</organism>
<evidence type="ECO:0000255" key="1"/>
<evidence type="ECO:0000269" key="2">
    <source>
    </source>
</evidence>
<evidence type="ECO:0000269" key="3">
    <source>
    </source>
</evidence>
<evidence type="ECO:0000305" key="4"/>
<feature type="chain" id="PRO_0000282318" description="Glycoprotein endo-alpha-1,2-mannosidase">
    <location>
        <begin position="1"/>
        <end position="462"/>
    </location>
</feature>
<feature type="topological domain" description="Cytoplasmic" evidence="1">
    <location>
        <begin position="1"/>
        <end position="9"/>
    </location>
</feature>
<feature type="transmembrane region" description="Helical; Signal-anchor for type II membrane protein" evidence="1">
    <location>
        <begin position="10"/>
        <end position="30"/>
    </location>
</feature>
<feature type="topological domain" description="Lumenal" evidence="1">
    <location>
        <begin position="31"/>
        <end position="462"/>
    </location>
</feature>
<feature type="region of interest" description="Catalytic" evidence="4">
    <location>
        <begin position="60"/>
        <end position="462"/>
    </location>
</feature>
<accession>Q5GF25</accession>
<accession>O35390</accession>
<name>MANEA_RAT</name>
<gene>
    <name type="primary">Manea</name>
</gene>
<reference key="1">
    <citation type="journal article" date="1997" name="J. Biol. Chem.">
        <title>Molecular cloning and expression of rat liver endo-alpha-mannosidase, an N-linked oligosaccharide processing enzyme.</title>
        <authorList>
            <person name="Spiro M.J."/>
            <person name="Bhoyroo V.D."/>
            <person name="Spiro R.G."/>
        </authorList>
    </citation>
    <scope>NUCLEOTIDE SEQUENCE [MRNA]</scope>
    <scope>PROTEIN SEQUENCE OF 245-253; 277-291 AND 381-400</scope>
    <scope>TISSUE SPECIFICITY</scope>
    <source>
        <strain>Sprague-Dawley</strain>
        <tissue>Liver</tissue>
    </source>
</reference>
<reference key="2">
    <citation type="journal article" date="2005" name="Glycobiology">
        <title>Intact alpha-1,2-endomannosidase is a typical type II membrane protein.</title>
        <authorList>
            <person name="Hamilton S.R."/>
            <person name="Li H."/>
            <person name="Wischnewski H."/>
            <person name="Prasad A."/>
            <person name="Kerley-Hamilton J.S."/>
            <person name="Mitchell T."/>
            <person name="Walling A.J."/>
            <person name="Davidson R.C."/>
            <person name="Wildt S."/>
            <person name="Gerngross T.U."/>
        </authorList>
    </citation>
    <scope>NUCLEOTIDE SEQUENCE [MRNA]</scope>
    <scope>CATALYTIC ACTIVITY</scope>
    <scope>PTM</scope>
    <scope>SUBCELLULAR LOCATION</scope>
    <scope>TOPOLOGY</scope>
    <source>
        <strain>Sprague-Dawley</strain>
        <tissue>Liver</tissue>
    </source>
</reference>
<protein>
    <recommendedName>
        <fullName>Glycoprotein endo-alpha-1,2-mannosidase</fullName>
        <shortName>Endo-alpha mannosidase</shortName>
        <shortName>Endomannosidase</shortName>
        <shortName>rEndo</shortName>
        <ecNumber evidence="2">3.2.1.130</ecNumber>
    </recommendedName>
    <alternativeName>
        <fullName>Endo-alpha-D-mannosidase</fullName>
        <shortName>Enman</shortName>
    </alternativeName>
</protein>
<keyword id="KW-0903">Direct protein sequencing</keyword>
<keyword id="KW-0333">Golgi apparatus</keyword>
<keyword id="KW-0378">Hydrolase</keyword>
<keyword id="KW-0472">Membrane</keyword>
<keyword id="KW-1185">Reference proteome</keyword>
<keyword id="KW-0735">Signal-anchor</keyword>
<keyword id="KW-0812">Transmembrane</keyword>
<keyword id="KW-1133">Transmembrane helix</keyword>